<dbReference type="EC" id="7.-.-.-" evidence="1"/>
<dbReference type="EMBL" id="CP000034">
    <property type="protein sequence ID" value="ABB61959.1"/>
    <property type="molecule type" value="Genomic_DNA"/>
</dbReference>
<dbReference type="RefSeq" id="WP_000133193.1">
    <property type="nucleotide sequence ID" value="NC_007606.1"/>
</dbReference>
<dbReference type="RefSeq" id="YP_403450.1">
    <property type="nucleotide sequence ID" value="NC_007606.1"/>
</dbReference>
<dbReference type="SMR" id="Q32FE6"/>
<dbReference type="STRING" id="300267.SDY_1850"/>
<dbReference type="EnsemblBacteria" id="ABB61959">
    <property type="protein sequence ID" value="ABB61959"/>
    <property type="gene ID" value="SDY_1850"/>
</dbReference>
<dbReference type="GeneID" id="89516393"/>
<dbReference type="KEGG" id="sdy:SDY_1850"/>
<dbReference type="PATRIC" id="fig|300267.13.peg.2229"/>
<dbReference type="HOGENOM" id="CLU_095255_1_0_6"/>
<dbReference type="Proteomes" id="UP000002716">
    <property type="component" value="Chromosome"/>
</dbReference>
<dbReference type="GO" id="GO:0005886">
    <property type="term" value="C:plasma membrane"/>
    <property type="evidence" value="ECO:0007669"/>
    <property type="project" value="UniProtKB-SubCell"/>
</dbReference>
<dbReference type="GO" id="GO:0022900">
    <property type="term" value="P:electron transport chain"/>
    <property type="evidence" value="ECO:0007669"/>
    <property type="project" value="UniProtKB-UniRule"/>
</dbReference>
<dbReference type="HAMAP" id="MF_00459">
    <property type="entry name" value="RsxA_RnfA"/>
    <property type="match status" value="1"/>
</dbReference>
<dbReference type="InterPro" id="IPR011293">
    <property type="entry name" value="Ion_transpt_RnfA/RsxA"/>
</dbReference>
<dbReference type="InterPro" id="IPR003667">
    <property type="entry name" value="NqrDE/RnfAE"/>
</dbReference>
<dbReference type="InterPro" id="IPR050133">
    <property type="entry name" value="NqrDE/RnfAE_oxidrdctase"/>
</dbReference>
<dbReference type="NCBIfam" id="NF003481">
    <property type="entry name" value="PRK05151.1"/>
    <property type="match status" value="1"/>
</dbReference>
<dbReference type="NCBIfam" id="TIGR01943">
    <property type="entry name" value="rnfA"/>
    <property type="match status" value="1"/>
</dbReference>
<dbReference type="PANTHER" id="PTHR30335">
    <property type="entry name" value="INTEGRAL MEMBRANE PROTEIN OF SOXR-REDUCING COMPLEX"/>
    <property type="match status" value="1"/>
</dbReference>
<dbReference type="PANTHER" id="PTHR30335:SF0">
    <property type="entry name" value="ION-TRANSLOCATING OXIDOREDUCTASE COMPLEX SUBUNIT A"/>
    <property type="match status" value="1"/>
</dbReference>
<dbReference type="Pfam" id="PF02508">
    <property type="entry name" value="Rnf-Nqr"/>
    <property type="match status" value="1"/>
</dbReference>
<dbReference type="PIRSF" id="PIRSF006102">
    <property type="entry name" value="NQR_DE"/>
    <property type="match status" value="1"/>
</dbReference>
<protein>
    <recommendedName>
        <fullName evidence="1">Ion-translocating oxidoreductase complex subunit A</fullName>
        <ecNumber evidence="1">7.-.-.-</ecNumber>
    </recommendedName>
    <alternativeName>
        <fullName evidence="1">Rsx electron transport complex subunit A</fullName>
    </alternativeName>
</protein>
<keyword id="KW-0997">Cell inner membrane</keyword>
<keyword id="KW-1003">Cell membrane</keyword>
<keyword id="KW-0249">Electron transport</keyword>
<keyword id="KW-0472">Membrane</keyword>
<keyword id="KW-1185">Reference proteome</keyword>
<keyword id="KW-1278">Translocase</keyword>
<keyword id="KW-0812">Transmembrane</keyword>
<keyword id="KW-1133">Transmembrane helix</keyword>
<keyword id="KW-0813">Transport</keyword>
<name>RSXA_SHIDS</name>
<sequence length="193" mass="20898">MTDYLLLFVGTVLVNNFVLVKFLGLCPFMGVSKKLETAMGMGLATTFVMTLASICAWLIDTWILIPLNLIYLRTLAFILVIAVVVQFTEMVVRKTSPVLYRLLGIFLPLITTNCAVLGVALLNINLGHNFLQSALYGFSAAVGFSLVMVLFAAIRERLAVADVPAPFRGNAIALITAGLMSLAFMGFSGLVKL</sequence>
<evidence type="ECO:0000255" key="1">
    <source>
        <dbReference type="HAMAP-Rule" id="MF_00459"/>
    </source>
</evidence>
<organism>
    <name type="scientific">Shigella dysenteriae serotype 1 (strain Sd197)</name>
    <dbReference type="NCBI Taxonomy" id="300267"/>
    <lineage>
        <taxon>Bacteria</taxon>
        <taxon>Pseudomonadati</taxon>
        <taxon>Pseudomonadota</taxon>
        <taxon>Gammaproteobacteria</taxon>
        <taxon>Enterobacterales</taxon>
        <taxon>Enterobacteriaceae</taxon>
        <taxon>Shigella</taxon>
    </lineage>
</organism>
<accession>Q32FE6</accession>
<feature type="chain" id="PRO_1000013557" description="Ion-translocating oxidoreductase complex subunit A">
    <location>
        <begin position="1"/>
        <end position="193"/>
    </location>
</feature>
<feature type="transmembrane region" description="Helical" evidence="1">
    <location>
        <begin position="5"/>
        <end position="25"/>
    </location>
</feature>
<feature type="transmembrane region" description="Helical" evidence="1">
    <location>
        <begin position="39"/>
        <end position="59"/>
    </location>
</feature>
<feature type="transmembrane region" description="Helical" evidence="1">
    <location>
        <begin position="63"/>
        <end position="83"/>
    </location>
</feature>
<feature type="transmembrane region" description="Helical" evidence="1">
    <location>
        <begin position="102"/>
        <end position="122"/>
    </location>
</feature>
<feature type="transmembrane region" description="Helical" evidence="1">
    <location>
        <begin position="134"/>
        <end position="154"/>
    </location>
</feature>
<feature type="transmembrane region" description="Helical" evidence="1">
    <location>
        <begin position="171"/>
        <end position="191"/>
    </location>
</feature>
<comment type="function">
    <text evidence="1">Part of a membrane-bound complex that couples electron transfer with translocation of ions across the membrane. Required to maintain the reduced state of SoxR.</text>
</comment>
<comment type="subunit">
    <text evidence="1">The complex is composed of six subunits: RsxA, RsxB, RsxC, RsxD, RsxE and RsxG.</text>
</comment>
<comment type="subcellular location">
    <subcellularLocation>
        <location evidence="1">Cell inner membrane</location>
        <topology evidence="1">Multi-pass membrane protein</topology>
    </subcellularLocation>
</comment>
<comment type="similarity">
    <text evidence="1">Belongs to the NqrDE/RnfAE family.</text>
</comment>
<proteinExistence type="inferred from homology"/>
<gene>
    <name evidence="1" type="primary">rsxA</name>
    <name type="ordered locus">SDY_1850</name>
</gene>
<reference key="1">
    <citation type="journal article" date="2005" name="Nucleic Acids Res.">
        <title>Genome dynamics and diversity of Shigella species, the etiologic agents of bacillary dysentery.</title>
        <authorList>
            <person name="Yang F."/>
            <person name="Yang J."/>
            <person name="Zhang X."/>
            <person name="Chen L."/>
            <person name="Jiang Y."/>
            <person name="Yan Y."/>
            <person name="Tang X."/>
            <person name="Wang J."/>
            <person name="Xiong Z."/>
            <person name="Dong J."/>
            <person name="Xue Y."/>
            <person name="Zhu Y."/>
            <person name="Xu X."/>
            <person name="Sun L."/>
            <person name="Chen S."/>
            <person name="Nie H."/>
            <person name="Peng J."/>
            <person name="Xu J."/>
            <person name="Wang Y."/>
            <person name="Yuan Z."/>
            <person name="Wen Y."/>
            <person name="Yao Z."/>
            <person name="Shen Y."/>
            <person name="Qiang B."/>
            <person name="Hou Y."/>
            <person name="Yu J."/>
            <person name="Jin Q."/>
        </authorList>
    </citation>
    <scope>NUCLEOTIDE SEQUENCE [LARGE SCALE GENOMIC DNA]</scope>
    <source>
        <strain>Sd197</strain>
    </source>
</reference>